<feature type="chain" id="PRO_1000020335" description="Threonine--tRNA ligase">
    <location>
        <begin position="1"/>
        <end position="641"/>
    </location>
</feature>
<feature type="domain" description="TGS" evidence="2">
    <location>
        <begin position="1"/>
        <end position="61"/>
    </location>
</feature>
<feature type="region of interest" description="Catalytic" evidence="1">
    <location>
        <begin position="242"/>
        <end position="533"/>
    </location>
</feature>
<feature type="binding site" evidence="1">
    <location>
        <position position="333"/>
    </location>
    <ligand>
        <name>Zn(2+)</name>
        <dbReference type="ChEBI" id="CHEBI:29105"/>
    </ligand>
</feature>
<feature type="binding site" evidence="1">
    <location>
        <position position="384"/>
    </location>
    <ligand>
        <name>Zn(2+)</name>
        <dbReference type="ChEBI" id="CHEBI:29105"/>
    </ligand>
</feature>
<feature type="binding site" evidence="1">
    <location>
        <position position="510"/>
    </location>
    <ligand>
        <name>Zn(2+)</name>
        <dbReference type="ChEBI" id="CHEBI:29105"/>
    </ligand>
</feature>
<proteinExistence type="inferred from homology"/>
<accession>Q0AAL5</accession>
<protein>
    <recommendedName>
        <fullName evidence="1">Threonine--tRNA ligase</fullName>
        <ecNumber evidence="1">6.1.1.3</ecNumber>
    </recommendedName>
    <alternativeName>
        <fullName evidence="1">Threonyl-tRNA synthetase</fullName>
        <shortName evidence="1">ThrRS</shortName>
    </alternativeName>
</protein>
<reference key="1">
    <citation type="submission" date="2006-08" db="EMBL/GenBank/DDBJ databases">
        <title>Complete sequence of Alkalilimnicola ehrilichei MLHE-1.</title>
        <authorList>
            <person name="Copeland A."/>
            <person name="Lucas S."/>
            <person name="Lapidus A."/>
            <person name="Barry K."/>
            <person name="Detter J.C."/>
            <person name="Glavina del Rio T."/>
            <person name="Hammon N."/>
            <person name="Israni S."/>
            <person name="Dalin E."/>
            <person name="Tice H."/>
            <person name="Pitluck S."/>
            <person name="Sims D."/>
            <person name="Brettin T."/>
            <person name="Bruce D."/>
            <person name="Han C."/>
            <person name="Tapia R."/>
            <person name="Gilna P."/>
            <person name="Schmutz J."/>
            <person name="Larimer F."/>
            <person name="Land M."/>
            <person name="Hauser L."/>
            <person name="Kyrpides N."/>
            <person name="Mikhailova N."/>
            <person name="Oremland R.S."/>
            <person name="Hoeft S.E."/>
            <person name="Switzer-Blum J."/>
            <person name="Kulp T."/>
            <person name="King G."/>
            <person name="Tabita R."/>
            <person name="Witte B."/>
            <person name="Santini J.M."/>
            <person name="Basu P."/>
            <person name="Hollibaugh J.T."/>
            <person name="Xie G."/>
            <person name="Stolz J.F."/>
            <person name="Richardson P."/>
        </authorList>
    </citation>
    <scope>NUCLEOTIDE SEQUENCE [LARGE SCALE GENOMIC DNA]</scope>
    <source>
        <strain>ATCC BAA-1101 / DSM 17681 / MLHE-1</strain>
    </source>
</reference>
<dbReference type="EC" id="6.1.1.3" evidence="1"/>
<dbReference type="EMBL" id="CP000453">
    <property type="protein sequence ID" value="ABI56122.1"/>
    <property type="molecule type" value="Genomic_DNA"/>
</dbReference>
<dbReference type="RefSeq" id="WP_011628517.1">
    <property type="nucleotide sequence ID" value="NC_008340.1"/>
</dbReference>
<dbReference type="SMR" id="Q0AAL5"/>
<dbReference type="KEGG" id="aeh:Mlg_0768"/>
<dbReference type="eggNOG" id="COG0441">
    <property type="taxonomic scope" value="Bacteria"/>
</dbReference>
<dbReference type="HOGENOM" id="CLU_008554_0_1_6"/>
<dbReference type="OrthoDB" id="9802304at2"/>
<dbReference type="Proteomes" id="UP000001962">
    <property type="component" value="Chromosome"/>
</dbReference>
<dbReference type="GO" id="GO:0005829">
    <property type="term" value="C:cytosol"/>
    <property type="evidence" value="ECO:0007669"/>
    <property type="project" value="TreeGrafter"/>
</dbReference>
<dbReference type="GO" id="GO:0005524">
    <property type="term" value="F:ATP binding"/>
    <property type="evidence" value="ECO:0007669"/>
    <property type="project" value="UniProtKB-UniRule"/>
</dbReference>
<dbReference type="GO" id="GO:0046872">
    <property type="term" value="F:metal ion binding"/>
    <property type="evidence" value="ECO:0007669"/>
    <property type="project" value="UniProtKB-KW"/>
</dbReference>
<dbReference type="GO" id="GO:0004829">
    <property type="term" value="F:threonine-tRNA ligase activity"/>
    <property type="evidence" value="ECO:0007669"/>
    <property type="project" value="UniProtKB-UniRule"/>
</dbReference>
<dbReference type="GO" id="GO:0000049">
    <property type="term" value="F:tRNA binding"/>
    <property type="evidence" value="ECO:0007669"/>
    <property type="project" value="UniProtKB-KW"/>
</dbReference>
<dbReference type="GO" id="GO:0006435">
    <property type="term" value="P:threonyl-tRNA aminoacylation"/>
    <property type="evidence" value="ECO:0007669"/>
    <property type="project" value="UniProtKB-UniRule"/>
</dbReference>
<dbReference type="CDD" id="cd01667">
    <property type="entry name" value="TGS_ThrRS"/>
    <property type="match status" value="1"/>
</dbReference>
<dbReference type="CDD" id="cd00860">
    <property type="entry name" value="ThrRS_anticodon"/>
    <property type="match status" value="1"/>
</dbReference>
<dbReference type="CDD" id="cd00771">
    <property type="entry name" value="ThrRS_core"/>
    <property type="match status" value="1"/>
</dbReference>
<dbReference type="FunFam" id="3.10.20.30:FF:000005">
    <property type="entry name" value="Threonine--tRNA ligase"/>
    <property type="match status" value="1"/>
</dbReference>
<dbReference type="FunFam" id="3.30.54.20:FF:000002">
    <property type="entry name" value="Threonine--tRNA ligase"/>
    <property type="match status" value="1"/>
</dbReference>
<dbReference type="FunFam" id="3.30.930.10:FF:000002">
    <property type="entry name" value="Threonine--tRNA ligase"/>
    <property type="match status" value="1"/>
</dbReference>
<dbReference type="FunFam" id="3.40.50.800:FF:000001">
    <property type="entry name" value="Threonine--tRNA ligase"/>
    <property type="match status" value="1"/>
</dbReference>
<dbReference type="FunFam" id="3.30.980.10:FF:000005">
    <property type="entry name" value="Threonyl-tRNA synthetase, mitochondrial"/>
    <property type="match status" value="1"/>
</dbReference>
<dbReference type="Gene3D" id="3.10.20.30">
    <property type="match status" value="1"/>
</dbReference>
<dbReference type="Gene3D" id="3.30.54.20">
    <property type="match status" value="1"/>
</dbReference>
<dbReference type="Gene3D" id="3.40.50.800">
    <property type="entry name" value="Anticodon-binding domain"/>
    <property type="match status" value="1"/>
</dbReference>
<dbReference type="Gene3D" id="3.30.930.10">
    <property type="entry name" value="Bira Bifunctional Protein, Domain 2"/>
    <property type="match status" value="1"/>
</dbReference>
<dbReference type="Gene3D" id="3.30.980.10">
    <property type="entry name" value="Threonyl-trna Synthetase, Chain A, domain 2"/>
    <property type="match status" value="1"/>
</dbReference>
<dbReference type="HAMAP" id="MF_00184">
    <property type="entry name" value="Thr_tRNA_synth"/>
    <property type="match status" value="1"/>
</dbReference>
<dbReference type="InterPro" id="IPR002314">
    <property type="entry name" value="aa-tRNA-synt_IIb"/>
</dbReference>
<dbReference type="InterPro" id="IPR006195">
    <property type="entry name" value="aa-tRNA-synth_II"/>
</dbReference>
<dbReference type="InterPro" id="IPR045864">
    <property type="entry name" value="aa-tRNA-synth_II/BPL/LPL"/>
</dbReference>
<dbReference type="InterPro" id="IPR004154">
    <property type="entry name" value="Anticodon-bd"/>
</dbReference>
<dbReference type="InterPro" id="IPR036621">
    <property type="entry name" value="Anticodon-bd_dom_sf"/>
</dbReference>
<dbReference type="InterPro" id="IPR012675">
    <property type="entry name" value="Beta-grasp_dom_sf"/>
</dbReference>
<dbReference type="InterPro" id="IPR004095">
    <property type="entry name" value="TGS"/>
</dbReference>
<dbReference type="InterPro" id="IPR012676">
    <property type="entry name" value="TGS-like"/>
</dbReference>
<dbReference type="InterPro" id="IPR002320">
    <property type="entry name" value="Thr-tRNA-ligase_IIa"/>
</dbReference>
<dbReference type="InterPro" id="IPR018163">
    <property type="entry name" value="Thr/Ala-tRNA-synth_IIc_edit"/>
</dbReference>
<dbReference type="InterPro" id="IPR047246">
    <property type="entry name" value="ThrRS_anticodon"/>
</dbReference>
<dbReference type="InterPro" id="IPR033728">
    <property type="entry name" value="ThrRS_core"/>
</dbReference>
<dbReference type="InterPro" id="IPR012947">
    <property type="entry name" value="tRNA_SAD"/>
</dbReference>
<dbReference type="NCBIfam" id="TIGR00418">
    <property type="entry name" value="thrS"/>
    <property type="match status" value="1"/>
</dbReference>
<dbReference type="PANTHER" id="PTHR11451:SF44">
    <property type="entry name" value="THREONINE--TRNA LIGASE, CHLOROPLASTIC_MITOCHONDRIAL 2"/>
    <property type="match status" value="1"/>
</dbReference>
<dbReference type="PANTHER" id="PTHR11451">
    <property type="entry name" value="THREONINE-TRNA LIGASE"/>
    <property type="match status" value="1"/>
</dbReference>
<dbReference type="Pfam" id="PF03129">
    <property type="entry name" value="HGTP_anticodon"/>
    <property type="match status" value="1"/>
</dbReference>
<dbReference type="Pfam" id="PF02824">
    <property type="entry name" value="TGS"/>
    <property type="match status" value="1"/>
</dbReference>
<dbReference type="Pfam" id="PF00587">
    <property type="entry name" value="tRNA-synt_2b"/>
    <property type="match status" value="1"/>
</dbReference>
<dbReference type="Pfam" id="PF07973">
    <property type="entry name" value="tRNA_SAD"/>
    <property type="match status" value="1"/>
</dbReference>
<dbReference type="PRINTS" id="PR01047">
    <property type="entry name" value="TRNASYNTHTHR"/>
</dbReference>
<dbReference type="SMART" id="SM00863">
    <property type="entry name" value="tRNA_SAD"/>
    <property type="match status" value="1"/>
</dbReference>
<dbReference type="SUPFAM" id="SSF52954">
    <property type="entry name" value="Class II aaRS ABD-related"/>
    <property type="match status" value="1"/>
</dbReference>
<dbReference type="SUPFAM" id="SSF55681">
    <property type="entry name" value="Class II aaRS and biotin synthetases"/>
    <property type="match status" value="1"/>
</dbReference>
<dbReference type="SUPFAM" id="SSF81271">
    <property type="entry name" value="TGS-like"/>
    <property type="match status" value="1"/>
</dbReference>
<dbReference type="SUPFAM" id="SSF55186">
    <property type="entry name" value="ThrRS/AlaRS common domain"/>
    <property type="match status" value="1"/>
</dbReference>
<dbReference type="PROSITE" id="PS50862">
    <property type="entry name" value="AA_TRNA_LIGASE_II"/>
    <property type="match status" value="1"/>
</dbReference>
<dbReference type="PROSITE" id="PS51880">
    <property type="entry name" value="TGS"/>
    <property type="match status" value="1"/>
</dbReference>
<comment type="function">
    <text evidence="1">Catalyzes the attachment of threonine to tRNA(Thr) in a two-step reaction: L-threonine is first activated by ATP to form Thr-AMP and then transferred to the acceptor end of tRNA(Thr). Also edits incorrectly charged L-seryl-tRNA(Thr).</text>
</comment>
<comment type="catalytic activity">
    <reaction evidence="1">
        <text>tRNA(Thr) + L-threonine + ATP = L-threonyl-tRNA(Thr) + AMP + diphosphate + H(+)</text>
        <dbReference type="Rhea" id="RHEA:24624"/>
        <dbReference type="Rhea" id="RHEA-COMP:9670"/>
        <dbReference type="Rhea" id="RHEA-COMP:9704"/>
        <dbReference type="ChEBI" id="CHEBI:15378"/>
        <dbReference type="ChEBI" id="CHEBI:30616"/>
        <dbReference type="ChEBI" id="CHEBI:33019"/>
        <dbReference type="ChEBI" id="CHEBI:57926"/>
        <dbReference type="ChEBI" id="CHEBI:78442"/>
        <dbReference type="ChEBI" id="CHEBI:78534"/>
        <dbReference type="ChEBI" id="CHEBI:456215"/>
        <dbReference type="EC" id="6.1.1.3"/>
    </reaction>
</comment>
<comment type="cofactor">
    <cofactor evidence="1">
        <name>Zn(2+)</name>
        <dbReference type="ChEBI" id="CHEBI:29105"/>
    </cofactor>
    <text evidence="1">Binds 1 zinc ion per subunit.</text>
</comment>
<comment type="subunit">
    <text evidence="1">Homodimer.</text>
</comment>
<comment type="subcellular location">
    <subcellularLocation>
        <location evidence="1">Cytoplasm</location>
    </subcellularLocation>
</comment>
<comment type="similarity">
    <text evidence="1">Belongs to the class-II aminoacyl-tRNA synthetase family.</text>
</comment>
<keyword id="KW-0030">Aminoacyl-tRNA synthetase</keyword>
<keyword id="KW-0067">ATP-binding</keyword>
<keyword id="KW-0963">Cytoplasm</keyword>
<keyword id="KW-0436">Ligase</keyword>
<keyword id="KW-0479">Metal-binding</keyword>
<keyword id="KW-0547">Nucleotide-binding</keyword>
<keyword id="KW-0648">Protein biosynthesis</keyword>
<keyword id="KW-1185">Reference proteome</keyword>
<keyword id="KW-0694">RNA-binding</keyword>
<keyword id="KW-0820">tRNA-binding</keyword>
<keyword id="KW-0862">Zinc</keyword>
<sequence>MPAITLPDGSRREFDHPVTVRDVAESIGKGLARAALAGRVDGRLVDLSHRIDDDVQLEIVTDRDPDGVDMIRHSTAHLMAQAVKELFPEAQVTIGPVIENGFYYDFAYKRPFTEDDLKAIEKKMEELARQDFEVHREVWDRDEAIRFFLEQGEQYKAEIIEDLPEHETISVYKQGDFLDLCRGPHVPNTGKLKAFKLQKVAGAYWRGKSDNEMLQRIYGTAWPDKKQLKAYLHRLAEAEKRDHRRIGRAQNLFHLQEEAPGMAFWHPKGWQIYLEVQEYIRRLTRGHGYQEIHTPQLVDRSLWEKSGHWDKFQDNMFITESESRDYAVKPMNCPCHVQVYNQGLKSYRDLPLRLAEFGSCHRNEPSGTLHGLMRVRNFVQDDAHIFCTEDQIQQEVADFIDLVFKAYNDFGFDDVIIALSTRPDERVGEDALWDKAEHALEEALNRAGLEWQLQPGEGAFYGPKIEFTLKDCLGRTWQLGTIQVDFSMPGRLGATYVAEDGSKKVPVMLHRAILGSLERFIGILIEHYAGALPPWLAPVQAVVLNITDRQGEYARRIEKRFRERGLRVDADLRNEKIGFKIREHTLQKVPYMLVVGDKEVENNTVAVRTREGQDLGSMAVDDFLQRLESEIARLGRSNSED</sequence>
<gene>
    <name evidence="1" type="primary">thrS</name>
    <name type="ordered locus">Mlg_0768</name>
</gene>
<name>SYT_ALKEH</name>
<evidence type="ECO:0000255" key="1">
    <source>
        <dbReference type="HAMAP-Rule" id="MF_00184"/>
    </source>
</evidence>
<evidence type="ECO:0000255" key="2">
    <source>
        <dbReference type="PROSITE-ProRule" id="PRU01228"/>
    </source>
</evidence>
<organism>
    <name type="scientific">Alkalilimnicola ehrlichii (strain ATCC BAA-1101 / DSM 17681 / MLHE-1)</name>
    <dbReference type="NCBI Taxonomy" id="187272"/>
    <lineage>
        <taxon>Bacteria</taxon>
        <taxon>Pseudomonadati</taxon>
        <taxon>Pseudomonadota</taxon>
        <taxon>Gammaproteobacteria</taxon>
        <taxon>Chromatiales</taxon>
        <taxon>Ectothiorhodospiraceae</taxon>
        <taxon>Alkalilimnicola</taxon>
    </lineage>
</organism>